<dbReference type="EMBL" id="CP000116">
    <property type="protein sequence ID" value="AAZ98543.1"/>
    <property type="molecule type" value="Genomic_DNA"/>
</dbReference>
<dbReference type="RefSeq" id="WP_011313102.1">
    <property type="nucleotide sequence ID" value="NC_007404.1"/>
</dbReference>
<dbReference type="SMR" id="Q3SFR3"/>
<dbReference type="STRING" id="292415.Tbd_2590"/>
<dbReference type="KEGG" id="tbd:Tbd_2590"/>
<dbReference type="eggNOG" id="COG0267">
    <property type="taxonomic scope" value="Bacteria"/>
</dbReference>
<dbReference type="HOGENOM" id="CLU_190949_1_1_4"/>
<dbReference type="OrthoDB" id="21586at2"/>
<dbReference type="Proteomes" id="UP000008291">
    <property type="component" value="Chromosome"/>
</dbReference>
<dbReference type="GO" id="GO:0022625">
    <property type="term" value="C:cytosolic large ribosomal subunit"/>
    <property type="evidence" value="ECO:0007669"/>
    <property type="project" value="TreeGrafter"/>
</dbReference>
<dbReference type="GO" id="GO:0003735">
    <property type="term" value="F:structural constituent of ribosome"/>
    <property type="evidence" value="ECO:0007669"/>
    <property type="project" value="InterPro"/>
</dbReference>
<dbReference type="GO" id="GO:0006412">
    <property type="term" value="P:translation"/>
    <property type="evidence" value="ECO:0007669"/>
    <property type="project" value="UniProtKB-UniRule"/>
</dbReference>
<dbReference type="FunFam" id="2.20.28.120:FF:000001">
    <property type="entry name" value="50S ribosomal protein L33"/>
    <property type="match status" value="1"/>
</dbReference>
<dbReference type="Gene3D" id="2.20.28.120">
    <property type="entry name" value="Ribosomal protein L33"/>
    <property type="match status" value="1"/>
</dbReference>
<dbReference type="HAMAP" id="MF_00294">
    <property type="entry name" value="Ribosomal_bL33"/>
    <property type="match status" value="1"/>
</dbReference>
<dbReference type="InterPro" id="IPR001705">
    <property type="entry name" value="Ribosomal_bL33"/>
</dbReference>
<dbReference type="InterPro" id="IPR018264">
    <property type="entry name" value="Ribosomal_bL33_CS"/>
</dbReference>
<dbReference type="InterPro" id="IPR038584">
    <property type="entry name" value="Ribosomal_bL33_sf"/>
</dbReference>
<dbReference type="InterPro" id="IPR011332">
    <property type="entry name" value="Ribosomal_zn-bd"/>
</dbReference>
<dbReference type="NCBIfam" id="NF001860">
    <property type="entry name" value="PRK00595.1"/>
    <property type="match status" value="1"/>
</dbReference>
<dbReference type="NCBIfam" id="TIGR01023">
    <property type="entry name" value="rpmG_bact"/>
    <property type="match status" value="1"/>
</dbReference>
<dbReference type="PANTHER" id="PTHR15238">
    <property type="entry name" value="54S RIBOSOMAL PROTEIN L39, MITOCHONDRIAL"/>
    <property type="match status" value="1"/>
</dbReference>
<dbReference type="PANTHER" id="PTHR15238:SF1">
    <property type="entry name" value="LARGE RIBOSOMAL SUBUNIT PROTEIN BL33M"/>
    <property type="match status" value="1"/>
</dbReference>
<dbReference type="Pfam" id="PF00471">
    <property type="entry name" value="Ribosomal_L33"/>
    <property type="match status" value="1"/>
</dbReference>
<dbReference type="SUPFAM" id="SSF57829">
    <property type="entry name" value="Zn-binding ribosomal proteins"/>
    <property type="match status" value="1"/>
</dbReference>
<dbReference type="PROSITE" id="PS00582">
    <property type="entry name" value="RIBOSOMAL_L33"/>
    <property type="match status" value="1"/>
</dbReference>
<reference key="1">
    <citation type="journal article" date="2006" name="J. Bacteriol.">
        <title>The genome sequence of the obligately chemolithoautotrophic, facultatively anaerobic bacterium Thiobacillus denitrificans.</title>
        <authorList>
            <person name="Beller H.R."/>
            <person name="Chain P.S."/>
            <person name="Letain T.E."/>
            <person name="Chakicherla A."/>
            <person name="Larimer F.W."/>
            <person name="Richardson P.M."/>
            <person name="Coleman M.A."/>
            <person name="Wood A.P."/>
            <person name="Kelly D.P."/>
        </authorList>
    </citation>
    <scope>NUCLEOTIDE SEQUENCE [LARGE SCALE GENOMIC DNA]</scope>
    <source>
        <strain>ATCC 25259 / T1</strain>
    </source>
</reference>
<sequence length="55" mass="6361">MAKGGREKIKLESTAGTGHFYTTTKNKKTMPEKMEISKFDPKARKHVMYKETKLK</sequence>
<proteinExistence type="inferred from homology"/>
<feature type="chain" id="PRO_1000115163" description="Large ribosomal subunit protein bL33">
    <location>
        <begin position="1"/>
        <end position="55"/>
    </location>
</feature>
<feature type="region of interest" description="Disordered" evidence="2">
    <location>
        <begin position="1"/>
        <end position="29"/>
    </location>
</feature>
<feature type="compositionally biased region" description="Basic and acidic residues" evidence="2">
    <location>
        <begin position="1"/>
        <end position="11"/>
    </location>
</feature>
<feature type="compositionally biased region" description="Polar residues" evidence="2">
    <location>
        <begin position="14"/>
        <end position="24"/>
    </location>
</feature>
<name>RL33_THIDA</name>
<organism>
    <name type="scientific">Thiobacillus denitrificans (strain ATCC 25259 / T1)</name>
    <dbReference type="NCBI Taxonomy" id="292415"/>
    <lineage>
        <taxon>Bacteria</taxon>
        <taxon>Pseudomonadati</taxon>
        <taxon>Pseudomonadota</taxon>
        <taxon>Betaproteobacteria</taxon>
        <taxon>Nitrosomonadales</taxon>
        <taxon>Thiobacillaceae</taxon>
        <taxon>Thiobacillus</taxon>
    </lineage>
</organism>
<keyword id="KW-1185">Reference proteome</keyword>
<keyword id="KW-0687">Ribonucleoprotein</keyword>
<keyword id="KW-0689">Ribosomal protein</keyword>
<comment type="similarity">
    <text evidence="1">Belongs to the bacterial ribosomal protein bL33 family.</text>
</comment>
<evidence type="ECO:0000255" key="1">
    <source>
        <dbReference type="HAMAP-Rule" id="MF_00294"/>
    </source>
</evidence>
<evidence type="ECO:0000256" key="2">
    <source>
        <dbReference type="SAM" id="MobiDB-lite"/>
    </source>
</evidence>
<evidence type="ECO:0000305" key="3"/>
<accession>Q3SFR3</accession>
<gene>
    <name evidence="1" type="primary">rpmG</name>
    <name type="ordered locus">Tbd_2590</name>
</gene>
<protein>
    <recommendedName>
        <fullName evidence="1">Large ribosomal subunit protein bL33</fullName>
    </recommendedName>
    <alternativeName>
        <fullName evidence="3">50S ribosomal protein L33</fullName>
    </alternativeName>
</protein>